<protein>
    <recommendedName>
        <fullName evidence="1">Dihydroxy-acid dehydratase</fullName>
        <shortName evidence="1">DAD</shortName>
        <ecNumber evidence="1">4.2.1.9</ecNumber>
    </recommendedName>
</protein>
<name>ILVD_FRATN</name>
<sequence>MKKVLNKYSRRLTEDKSQGASQAMLYGTGMNDADMHKPQIGIGSVWYEGNTCNMHLNQLAQFVKDSVEKENLKGMRFNTIGVSDGISMGTDGMSYSLQSRDLIADSIETVMSAHWYDGLISIPGCDKNMPGCMMALGRLNRPGFVIYGGTIQAGVMRGKPIDIVTAFQSYGACLSGQITEQERQETIKKACPGAGACGGMYTANTMACAIEALGMSLPFSSSTPATSVEKVQECDKAGETIKNLLELDIKPRDIMTRKAFENAMVLITVMGGSTNAVLHLLAMASSVDVDLSIDDFQEIANKTPVLADFKPSGKYVMADLHAIGGTPAVMKMLLKAGMLHGDCLTVTGKTLAENLENVADLPEDNTIIHKLDNPIKKTGHLQILKGNVAPEGSVAKITGKEGEVFEGVANVFDSEEEMVAAVEEGKVKKGDVIVIRYEGPKGGPGMPEMLKPTSLIMGAGLGQDVALITDGRFSGGSHGFIVGHIAPEAYEGGMIALLENGDKITIDAINNVINVDLSDQEIAQRKSKWRAPKQKASRGTLKKYIKTVSSASTGCVTDLD</sequence>
<evidence type="ECO:0000255" key="1">
    <source>
        <dbReference type="HAMAP-Rule" id="MF_00012"/>
    </source>
</evidence>
<keyword id="KW-0001">2Fe-2S</keyword>
<keyword id="KW-0028">Amino-acid biosynthesis</keyword>
<keyword id="KW-0100">Branched-chain amino acid biosynthesis</keyword>
<keyword id="KW-0408">Iron</keyword>
<keyword id="KW-0411">Iron-sulfur</keyword>
<keyword id="KW-0456">Lyase</keyword>
<keyword id="KW-0460">Magnesium</keyword>
<keyword id="KW-0479">Metal-binding</keyword>
<organism>
    <name type="scientific">Francisella tularensis subsp. novicida (strain U112)</name>
    <dbReference type="NCBI Taxonomy" id="401614"/>
    <lineage>
        <taxon>Bacteria</taxon>
        <taxon>Pseudomonadati</taxon>
        <taxon>Pseudomonadota</taxon>
        <taxon>Gammaproteobacteria</taxon>
        <taxon>Thiotrichales</taxon>
        <taxon>Francisellaceae</taxon>
        <taxon>Francisella</taxon>
    </lineage>
</organism>
<comment type="function">
    <text evidence="1">Functions in the biosynthesis of branched-chain amino acids. Catalyzes the dehydration of (2R,3R)-2,3-dihydroxy-3-methylpentanoate (2,3-dihydroxy-3-methylvalerate) into 2-oxo-3-methylpentanoate (2-oxo-3-methylvalerate) and of (2R)-2,3-dihydroxy-3-methylbutanoate (2,3-dihydroxyisovalerate) into 2-oxo-3-methylbutanoate (2-oxoisovalerate), the penultimate precursor to L-isoleucine and L-valine, respectively.</text>
</comment>
<comment type="catalytic activity">
    <reaction evidence="1">
        <text>(2R)-2,3-dihydroxy-3-methylbutanoate = 3-methyl-2-oxobutanoate + H2O</text>
        <dbReference type="Rhea" id="RHEA:24809"/>
        <dbReference type="ChEBI" id="CHEBI:11851"/>
        <dbReference type="ChEBI" id="CHEBI:15377"/>
        <dbReference type="ChEBI" id="CHEBI:49072"/>
        <dbReference type="EC" id="4.2.1.9"/>
    </reaction>
    <physiologicalReaction direction="left-to-right" evidence="1">
        <dbReference type="Rhea" id="RHEA:24810"/>
    </physiologicalReaction>
</comment>
<comment type="catalytic activity">
    <reaction evidence="1">
        <text>(2R,3R)-2,3-dihydroxy-3-methylpentanoate = (S)-3-methyl-2-oxopentanoate + H2O</text>
        <dbReference type="Rhea" id="RHEA:27694"/>
        <dbReference type="ChEBI" id="CHEBI:15377"/>
        <dbReference type="ChEBI" id="CHEBI:35146"/>
        <dbReference type="ChEBI" id="CHEBI:49258"/>
        <dbReference type="EC" id="4.2.1.9"/>
    </reaction>
    <physiologicalReaction direction="left-to-right" evidence="1">
        <dbReference type="Rhea" id="RHEA:27695"/>
    </physiologicalReaction>
</comment>
<comment type="cofactor">
    <cofactor evidence="1">
        <name>[2Fe-2S] cluster</name>
        <dbReference type="ChEBI" id="CHEBI:190135"/>
    </cofactor>
    <text evidence="1">Binds 1 [2Fe-2S] cluster per subunit. This cluster acts as a Lewis acid cofactor.</text>
</comment>
<comment type="cofactor">
    <cofactor evidence="1">
        <name>Mg(2+)</name>
        <dbReference type="ChEBI" id="CHEBI:18420"/>
    </cofactor>
</comment>
<comment type="pathway">
    <text evidence="1">Amino-acid biosynthesis; L-isoleucine biosynthesis; L-isoleucine from 2-oxobutanoate: step 3/4.</text>
</comment>
<comment type="pathway">
    <text evidence="1">Amino-acid biosynthesis; L-valine biosynthesis; L-valine from pyruvate: step 3/4.</text>
</comment>
<comment type="subunit">
    <text evidence="1">Homodimer.</text>
</comment>
<comment type="similarity">
    <text evidence="1">Belongs to the IlvD/Edd family.</text>
</comment>
<dbReference type="EC" id="4.2.1.9" evidence="1"/>
<dbReference type="EMBL" id="CP000439">
    <property type="protein sequence ID" value="ABK89930.1"/>
    <property type="molecule type" value="Genomic_DNA"/>
</dbReference>
<dbReference type="RefSeq" id="WP_003039534.1">
    <property type="nucleotide sequence ID" value="NZ_CP009633.1"/>
</dbReference>
<dbReference type="SMR" id="A0Q6R5"/>
<dbReference type="KEGG" id="ftn:FTN_1043"/>
<dbReference type="BioCyc" id="FTUL401614:G1G75-1086-MONOMER"/>
<dbReference type="UniPathway" id="UPA00047">
    <property type="reaction ID" value="UER00057"/>
</dbReference>
<dbReference type="UniPathway" id="UPA00049">
    <property type="reaction ID" value="UER00061"/>
</dbReference>
<dbReference type="Proteomes" id="UP000000762">
    <property type="component" value="Chromosome"/>
</dbReference>
<dbReference type="GO" id="GO:0051537">
    <property type="term" value="F:2 iron, 2 sulfur cluster binding"/>
    <property type="evidence" value="ECO:0007669"/>
    <property type="project" value="UniProtKB-UniRule"/>
</dbReference>
<dbReference type="GO" id="GO:0004160">
    <property type="term" value="F:dihydroxy-acid dehydratase activity"/>
    <property type="evidence" value="ECO:0007669"/>
    <property type="project" value="UniProtKB-UniRule"/>
</dbReference>
<dbReference type="GO" id="GO:0000287">
    <property type="term" value="F:magnesium ion binding"/>
    <property type="evidence" value="ECO:0007669"/>
    <property type="project" value="UniProtKB-UniRule"/>
</dbReference>
<dbReference type="GO" id="GO:0009097">
    <property type="term" value="P:isoleucine biosynthetic process"/>
    <property type="evidence" value="ECO:0007669"/>
    <property type="project" value="UniProtKB-UniRule"/>
</dbReference>
<dbReference type="GO" id="GO:0009099">
    <property type="term" value="P:L-valine biosynthetic process"/>
    <property type="evidence" value="ECO:0007669"/>
    <property type="project" value="UniProtKB-UniRule"/>
</dbReference>
<dbReference type="FunFam" id="3.50.30.80:FF:000001">
    <property type="entry name" value="Dihydroxy-acid dehydratase"/>
    <property type="match status" value="1"/>
</dbReference>
<dbReference type="Gene3D" id="3.50.30.80">
    <property type="entry name" value="IlvD/EDD C-terminal domain-like"/>
    <property type="match status" value="1"/>
</dbReference>
<dbReference type="HAMAP" id="MF_00012">
    <property type="entry name" value="IlvD"/>
    <property type="match status" value="1"/>
</dbReference>
<dbReference type="InterPro" id="IPR050165">
    <property type="entry name" value="DHAD_IlvD/Edd"/>
</dbReference>
<dbReference type="InterPro" id="IPR042096">
    <property type="entry name" value="Dihydro-acid_dehy_C"/>
</dbReference>
<dbReference type="InterPro" id="IPR004404">
    <property type="entry name" value="DihydroxyA_deHydtase"/>
</dbReference>
<dbReference type="InterPro" id="IPR020558">
    <property type="entry name" value="DiOHA_6PGluconate_deHydtase_CS"/>
</dbReference>
<dbReference type="InterPro" id="IPR056740">
    <property type="entry name" value="ILV_EDD_C"/>
</dbReference>
<dbReference type="InterPro" id="IPR000581">
    <property type="entry name" value="ILV_EDD_N"/>
</dbReference>
<dbReference type="InterPro" id="IPR037237">
    <property type="entry name" value="IlvD/EDD_N"/>
</dbReference>
<dbReference type="NCBIfam" id="TIGR00110">
    <property type="entry name" value="ilvD"/>
    <property type="match status" value="1"/>
</dbReference>
<dbReference type="NCBIfam" id="NF002068">
    <property type="entry name" value="PRK00911.1"/>
    <property type="match status" value="1"/>
</dbReference>
<dbReference type="PANTHER" id="PTHR21000">
    <property type="entry name" value="DIHYDROXY-ACID DEHYDRATASE DAD"/>
    <property type="match status" value="1"/>
</dbReference>
<dbReference type="PANTHER" id="PTHR21000:SF5">
    <property type="entry name" value="DIHYDROXY-ACID DEHYDRATASE, MITOCHONDRIAL"/>
    <property type="match status" value="1"/>
</dbReference>
<dbReference type="Pfam" id="PF24877">
    <property type="entry name" value="ILV_EDD_C"/>
    <property type="match status" value="1"/>
</dbReference>
<dbReference type="Pfam" id="PF00920">
    <property type="entry name" value="ILVD_EDD_N"/>
    <property type="match status" value="1"/>
</dbReference>
<dbReference type="SUPFAM" id="SSF143975">
    <property type="entry name" value="IlvD/EDD N-terminal domain-like"/>
    <property type="match status" value="1"/>
</dbReference>
<dbReference type="SUPFAM" id="SSF52016">
    <property type="entry name" value="LeuD/IlvD-like"/>
    <property type="match status" value="1"/>
</dbReference>
<dbReference type="PROSITE" id="PS00886">
    <property type="entry name" value="ILVD_EDD_1"/>
    <property type="match status" value="1"/>
</dbReference>
<dbReference type="PROSITE" id="PS00887">
    <property type="entry name" value="ILVD_EDD_2"/>
    <property type="match status" value="1"/>
</dbReference>
<gene>
    <name evidence="1" type="primary">ilvD</name>
    <name type="ordered locus">FTN_1043</name>
</gene>
<feature type="chain" id="PRO_1000000984" description="Dihydroxy-acid dehydratase">
    <location>
        <begin position="1"/>
        <end position="560"/>
    </location>
</feature>
<feature type="active site" description="Proton acceptor" evidence="1">
    <location>
        <position position="474"/>
    </location>
</feature>
<feature type="binding site" evidence="1">
    <location>
        <position position="52"/>
    </location>
    <ligand>
        <name>[2Fe-2S] cluster</name>
        <dbReference type="ChEBI" id="CHEBI:190135"/>
    </ligand>
</feature>
<feature type="binding site" evidence="1">
    <location>
        <position position="84"/>
    </location>
    <ligand>
        <name>Mg(2+)</name>
        <dbReference type="ChEBI" id="CHEBI:18420"/>
    </ligand>
</feature>
<feature type="binding site" evidence="1">
    <location>
        <position position="125"/>
    </location>
    <ligand>
        <name>[2Fe-2S] cluster</name>
        <dbReference type="ChEBI" id="CHEBI:190135"/>
    </ligand>
</feature>
<feature type="binding site" evidence="1">
    <location>
        <position position="126"/>
    </location>
    <ligand>
        <name>Mg(2+)</name>
        <dbReference type="ChEBI" id="CHEBI:18420"/>
    </ligand>
</feature>
<feature type="binding site" description="via carbamate group" evidence="1">
    <location>
        <position position="127"/>
    </location>
    <ligand>
        <name>Mg(2+)</name>
        <dbReference type="ChEBI" id="CHEBI:18420"/>
    </ligand>
</feature>
<feature type="binding site" evidence="1">
    <location>
        <position position="197"/>
    </location>
    <ligand>
        <name>[2Fe-2S] cluster</name>
        <dbReference type="ChEBI" id="CHEBI:190135"/>
    </ligand>
</feature>
<feature type="binding site" evidence="1">
    <location>
        <position position="448"/>
    </location>
    <ligand>
        <name>Mg(2+)</name>
        <dbReference type="ChEBI" id="CHEBI:18420"/>
    </ligand>
</feature>
<feature type="modified residue" description="N6-carboxylysine" evidence="1">
    <location>
        <position position="127"/>
    </location>
</feature>
<accession>A0Q6R5</accession>
<reference key="1">
    <citation type="journal article" date="2007" name="Genome Biol.">
        <title>Comparison of Francisella tularensis genomes reveals evolutionary events associated with the emergence of human pathogenic strains.</title>
        <authorList>
            <person name="Rohmer L."/>
            <person name="Fong C."/>
            <person name="Abmayr S."/>
            <person name="Wasnick M."/>
            <person name="Larson Freeman T.J."/>
            <person name="Radey M."/>
            <person name="Guina T."/>
            <person name="Svensson K."/>
            <person name="Hayden H.S."/>
            <person name="Jacobs M."/>
            <person name="Gallagher L.A."/>
            <person name="Manoil C."/>
            <person name="Ernst R.K."/>
            <person name="Drees B."/>
            <person name="Buckley D."/>
            <person name="Haugen E."/>
            <person name="Bovee D."/>
            <person name="Zhou Y."/>
            <person name="Chang J."/>
            <person name="Levy R."/>
            <person name="Lim R."/>
            <person name="Gillett W."/>
            <person name="Guenthener D."/>
            <person name="Kang A."/>
            <person name="Shaffer S.A."/>
            <person name="Taylor G."/>
            <person name="Chen J."/>
            <person name="Gallis B."/>
            <person name="D'Argenio D.A."/>
            <person name="Forsman M."/>
            <person name="Olson M.V."/>
            <person name="Goodlett D.R."/>
            <person name="Kaul R."/>
            <person name="Miller S.I."/>
            <person name="Brittnacher M.J."/>
        </authorList>
    </citation>
    <scope>NUCLEOTIDE SEQUENCE [LARGE SCALE GENOMIC DNA]</scope>
    <source>
        <strain>U112</strain>
    </source>
</reference>
<proteinExistence type="inferred from homology"/>